<feature type="chain" id="PRO_0000074869" description="Adaptive-response sensory kinase SasA">
    <location>
        <begin position="1"/>
        <end position="370"/>
    </location>
</feature>
<feature type="domain" description="Histidine kinase" evidence="1">
    <location>
        <begin position="152"/>
        <end position="365"/>
    </location>
</feature>
<feature type="modified residue" description="Phosphohistidine; by autocatalysis" evidence="1">
    <location>
        <position position="155"/>
    </location>
</feature>
<protein>
    <recommendedName>
        <fullName evidence="1">Adaptive-response sensory kinase SasA</fullName>
        <ecNumber evidence="1">2.7.13.3</ecNumber>
    </recommendedName>
    <alternativeName>
        <fullName evidence="1">Sensor histidine kinase SasA</fullName>
    </alternativeName>
</protein>
<keyword id="KW-0067">ATP-binding</keyword>
<keyword id="KW-0090">Biological rhythms</keyword>
<keyword id="KW-0418">Kinase</keyword>
<keyword id="KW-0547">Nucleotide-binding</keyword>
<keyword id="KW-0597">Phosphoprotein</keyword>
<keyword id="KW-1185">Reference proteome</keyword>
<keyword id="KW-0808">Transferase</keyword>
<keyword id="KW-0902">Two-component regulatory system</keyword>
<gene>
    <name evidence="1" type="primary">sasA</name>
    <name type="ordered locus">PMT_1099</name>
</gene>
<comment type="function">
    <text evidence="1">Member of the two-component regulatory system SasA/RpaA involved in genome-wide circadian gene expression. One of several clock output pathways. Participates in the Kai clock protein complex, the main circadian regulator in cyanobacteria, via its interaction with KaiC. KaiC enhances the autophosphorylation activity of SasA, which then transfers its phosphate group to RpaA to activate it. In addition to its output function, recruits fold-shifted KaiB (KaiB(fs)) to KaiC to cooperatively form the KaiB(6):KaiC(6) complex (independent of SasA kinase activity). Required for robustness of the circadian rhythm of gene expression and is involved in clock output, also required for adaptation to light/dark cycles.</text>
</comment>
<comment type="catalytic activity">
    <reaction evidence="1">
        <text>ATP + protein L-histidine = ADP + protein N-phospho-L-histidine.</text>
        <dbReference type="EC" id="2.7.13.3"/>
    </reaction>
</comment>
<comment type="subunit">
    <text evidence="1">Homooligomerizes. Interacts with KaiC. Participates in the KaiBC complex, whose core is composed of a KaiC homohexamer and 6 KaiB.</text>
</comment>
<comment type="domain">
    <text evidence="1">The N-terminus interacts with KaiC, while the C-terminal histidine kinase domain autophosphorylates and is probably responsible for self-oligomerization. The N-terminal domain stimulates the C-terminus to autophosphorylate.</text>
</comment>
<name>SASA_PROMM</name>
<organism>
    <name type="scientific">Prochlorococcus marinus (strain MIT 9313)</name>
    <dbReference type="NCBI Taxonomy" id="74547"/>
    <lineage>
        <taxon>Bacteria</taxon>
        <taxon>Bacillati</taxon>
        <taxon>Cyanobacteriota</taxon>
        <taxon>Cyanophyceae</taxon>
        <taxon>Synechococcales</taxon>
        <taxon>Prochlorococcaceae</taxon>
        <taxon>Prochlorococcus</taxon>
    </lineage>
</organism>
<sequence length="370" mass="42224">MDGVKANQRQQLQLLLVAARHQLSRSDLRSMIQFLENEDCGFNVTLQMADPSEQPELLELHRLVATPALIKLSPTPKQVFAGSSIFQQLQNWITRWQQDIVVTGLGLSLRPTELDGSRTQRELQLEDQLLVLRQENETLIDRLNAQERTLRMVAHELRTPLTAAVLALQSQQLGQINIEHFQDVVKRRLDEIELLSKDLLEVKSTKWEDLFNPQNLDLGNIAAEAILELEKLWLDRNIEIRTDIPSDLPKVFADQRRMRQVLLNLLENALKFTEDGGEVSLTMLHRTSHWVQVSICDNGPGIPEDEQERIFLDRVRLPQTSVSTSGFGVGLSVCRRIVEVHGGKIWVVSEPDKGACFYLTVPVWQRNGQE</sequence>
<evidence type="ECO:0000255" key="1">
    <source>
        <dbReference type="HAMAP-Rule" id="MF_01837"/>
    </source>
</evidence>
<dbReference type="EC" id="2.7.13.3" evidence="1"/>
<dbReference type="EMBL" id="BX548175">
    <property type="protein sequence ID" value="CAE21274.1"/>
    <property type="molecule type" value="Genomic_DNA"/>
</dbReference>
<dbReference type="RefSeq" id="WP_011130471.1">
    <property type="nucleotide sequence ID" value="NC_005071.1"/>
</dbReference>
<dbReference type="SMR" id="Q7V6P7"/>
<dbReference type="KEGG" id="pmt:PMT_1099"/>
<dbReference type="eggNOG" id="COG2205">
    <property type="taxonomic scope" value="Bacteria"/>
</dbReference>
<dbReference type="HOGENOM" id="CLU_723030_0_0_3"/>
<dbReference type="OrthoDB" id="9773956at2"/>
<dbReference type="Proteomes" id="UP000001423">
    <property type="component" value="Chromosome"/>
</dbReference>
<dbReference type="GO" id="GO:0005524">
    <property type="term" value="F:ATP binding"/>
    <property type="evidence" value="ECO:0007669"/>
    <property type="project" value="UniProtKB-KW"/>
</dbReference>
<dbReference type="GO" id="GO:0000155">
    <property type="term" value="F:phosphorelay sensor kinase activity"/>
    <property type="evidence" value="ECO:0007669"/>
    <property type="project" value="InterPro"/>
</dbReference>
<dbReference type="GO" id="GO:0007623">
    <property type="term" value="P:circadian rhythm"/>
    <property type="evidence" value="ECO:0007669"/>
    <property type="project" value="UniProtKB-UniRule"/>
</dbReference>
<dbReference type="CDD" id="cd00075">
    <property type="entry name" value="HATPase"/>
    <property type="match status" value="1"/>
</dbReference>
<dbReference type="CDD" id="cd00082">
    <property type="entry name" value="HisKA"/>
    <property type="match status" value="1"/>
</dbReference>
<dbReference type="FunFam" id="3.30.565.10:FF:000006">
    <property type="entry name" value="Sensor histidine kinase WalK"/>
    <property type="match status" value="1"/>
</dbReference>
<dbReference type="Gene3D" id="1.10.287.130">
    <property type="match status" value="1"/>
</dbReference>
<dbReference type="Gene3D" id="3.40.30.10">
    <property type="entry name" value="Glutaredoxin"/>
    <property type="match status" value="1"/>
</dbReference>
<dbReference type="Gene3D" id="3.30.565.10">
    <property type="entry name" value="Histidine kinase-like ATPase, C-terminal domain"/>
    <property type="match status" value="1"/>
</dbReference>
<dbReference type="HAMAP" id="MF_01837">
    <property type="entry name" value="Kinase_SasA"/>
    <property type="match status" value="1"/>
</dbReference>
<dbReference type="InterPro" id="IPR036890">
    <property type="entry name" value="HATPase_C_sf"/>
</dbReference>
<dbReference type="InterPro" id="IPR005467">
    <property type="entry name" value="His_kinase_dom"/>
</dbReference>
<dbReference type="InterPro" id="IPR003661">
    <property type="entry name" value="HisK_dim/P_dom"/>
</dbReference>
<dbReference type="InterPro" id="IPR036097">
    <property type="entry name" value="HisK_dim/P_sf"/>
</dbReference>
<dbReference type="InterPro" id="IPR011649">
    <property type="entry name" value="KaiB_domain"/>
</dbReference>
<dbReference type="InterPro" id="IPR023527">
    <property type="entry name" value="Kinase_SasA"/>
</dbReference>
<dbReference type="InterPro" id="IPR050736">
    <property type="entry name" value="Sensor_HK_Regulatory"/>
</dbReference>
<dbReference type="InterPro" id="IPR004358">
    <property type="entry name" value="Sig_transdc_His_kin-like_C"/>
</dbReference>
<dbReference type="InterPro" id="IPR036249">
    <property type="entry name" value="Thioredoxin-like_sf"/>
</dbReference>
<dbReference type="NCBIfam" id="NF006800">
    <property type="entry name" value="PRK09303.1"/>
    <property type="match status" value="1"/>
</dbReference>
<dbReference type="PANTHER" id="PTHR43711:SF26">
    <property type="entry name" value="SENSOR HISTIDINE KINASE RCSC"/>
    <property type="match status" value="1"/>
</dbReference>
<dbReference type="PANTHER" id="PTHR43711">
    <property type="entry name" value="TWO-COMPONENT HISTIDINE KINASE"/>
    <property type="match status" value="1"/>
</dbReference>
<dbReference type="Pfam" id="PF02518">
    <property type="entry name" value="HATPase_c"/>
    <property type="match status" value="1"/>
</dbReference>
<dbReference type="Pfam" id="PF07689">
    <property type="entry name" value="KaiB"/>
    <property type="match status" value="1"/>
</dbReference>
<dbReference type="PRINTS" id="PR00344">
    <property type="entry name" value="BCTRLSENSOR"/>
</dbReference>
<dbReference type="SMART" id="SM00387">
    <property type="entry name" value="HATPase_c"/>
    <property type="match status" value="1"/>
</dbReference>
<dbReference type="SMART" id="SM01248">
    <property type="entry name" value="KaiB"/>
    <property type="match status" value="1"/>
</dbReference>
<dbReference type="SUPFAM" id="SSF55874">
    <property type="entry name" value="ATPase domain of HSP90 chaperone/DNA topoisomerase II/histidine kinase"/>
    <property type="match status" value="1"/>
</dbReference>
<dbReference type="SUPFAM" id="SSF47384">
    <property type="entry name" value="Homodimeric domain of signal transducing histidine kinase"/>
    <property type="match status" value="1"/>
</dbReference>
<dbReference type="SUPFAM" id="SSF52833">
    <property type="entry name" value="Thioredoxin-like"/>
    <property type="match status" value="1"/>
</dbReference>
<dbReference type="PROSITE" id="PS50109">
    <property type="entry name" value="HIS_KIN"/>
    <property type="match status" value="1"/>
</dbReference>
<accession>Q7V6P7</accession>
<reference key="1">
    <citation type="journal article" date="2003" name="Nature">
        <title>Genome divergence in two Prochlorococcus ecotypes reflects oceanic niche differentiation.</title>
        <authorList>
            <person name="Rocap G."/>
            <person name="Larimer F.W."/>
            <person name="Lamerdin J.E."/>
            <person name="Malfatti S."/>
            <person name="Chain P."/>
            <person name="Ahlgren N.A."/>
            <person name="Arellano A."/>
            <person name="Coleman M."/>
            <person name="Hauser L."/>
            <person name="Hess W.R."/>
            <person name="Johnson Z.I."/>
            <person name="Land M.L."/>
            <person name="Lindell D."/>
            <person name="Post A.F."/>
            <person name="Regala W."/>
            <person name="Shah M."/>
            <person name="Shaw S.L."/>
            <person name="Steglich C."/>
            <person name="Sullivan M.B."/>
            <person name="Ting C.S."/>
            <person name="Tolonen A."/>
            <person name="Webb E.A."/>
            <person name="Zinser E.R."/>
            <person name="Chisholm S.W."/>
        </authorList>
    </citation>
    <scope>NUCLEOTIDE SEQUENCE [LARGE SCALE GENOMIC DNA]</scope>
    <source>
        <strain>MIT 9313</strain>
    </source>
</reference>
<proteinExistence type="inferred from homology"/>